<proteinExistence type="inferred from homology"/>
<organism>
    <name type="scientific">Staphylococcus aureus (strain JH9)</name>
    <dbReference type="NCBI Taxonomy" id="359786"/>
    <lineage>
        <taxon>Bacteria</taxon>
        <taxon>Bacillati</taxon>
        <taxon>Bacillota</taxon>
        <taxon>Bacilli</taxon>
        <taxon>Bacillales</taxon>
        <taxon>Staphylococcaceae</taxon>
        <taxon>Staphylococcus</taxon>
    </lineage>
</organism>
<comment type="catalytic activity">
    <reaction evidence="1">
        <text>D-mannitol 1-phosphate + NAD(+) = beta-D-fructose 6-phosphate + NADH + H(+)</text>
        <dbReference type="Rhea" id="RHEA:19661"/>
        <dbReference type="ChEBI" id="CHEBI:15378"/>
        <dbReference type="ChEBI" id="CHEBI:57540"/>
        <dbReference type="ChEBI" id="CHEBI:57634"/>
        <dbReference type="ChEBI" id="CHEBI:57945"/>
        <dbReference type="ChEBI" id="CHEBI:61381"/>
        <dbReference type="EC" id="1.1.1.17"/>
    </reaction>
</comment>
<comment type="similarity">
    <text evidence="1">Belongs to the mannitol dehydrogenase family.</text>
</comment>
<name>MTLD_STAA9</name>
<accession>A5IUU9</accession>
<reference key="1">
    <citation type="submission" date="2007-05" db="EMBL/GenBank/DDBJ databases">
        <title>Complete sequence of chromosome of Staphylococcus aureus subsp. aureus JH9.</title>
        <authorList>
            <consortium name="US DOE Joint Genome Institute"/>
            <person name="Copeland A."/>
            <person name="Lucas S."/>
            <person name="Lapidus A."/>
            <person name="Barry K."/>
            <person name="Detter J.C."/>
            <person name="Glavina del Rio T."/>
            <person name="Hammon N."/>
            <person name="Israni S."/>
            <person name="Pitluck S."/>
            <person name="Chain P."/>
            <person name="Malfatti S."/>
            <person name="Shin M."/>
            <person name="Vergez L."/>
            <person name="Schmutz J."/>
            <person name="Larimer F."/>
            <person name="Land M."/>
            <person name="Hauser L."/>
            <person name="Kyrpides N."/>
            <person name="Kim E."/>
            <person name="Tomasz A."/>
            <person name="Richardson P."/>
        </authorList>
    </citation>
    <scope>NUCLEOTIDE SEQUENCE [LARGE SCALE GENOMIC DNA]</scope>
    <source>
        <strain>JH9</strain>
    </source>
</reference>
<sequence length="368" mass="40936">MKAVHFGAGNIGRGFIGYILADNNVKVTFADVNEEIINALAHDHQYDVILADESKTTTRVNNVDAINSMQPSEALKQAILEADIITTAVGVNILPIIAKSFAPFLKEKTNHVNIVACENAIMATDTLKKAVLDITGPLGNNIHFANSAVDRIVPLQKNENILDVMVEPFYEWVVEKDAWYGPELNHIKYVDDLTPYIERKLLTVNTGHAYLAYAGKFAGKATVLDAVKDSSIEAGLRRVLAETSQYITNEFDFTEAEQAGYVEKIIDRFNNSYLSDEVTRVGRGTLRKIGPKDRIIKPLTYLYNKDLERTGLLNTAALLLKYDDTADQETVEKNNYIKEHGLKAFLSEYAKVDDGLADEIIEAYNSLS</sequence>
<dbReference type="EC" id="1.1.1.17" evidence="1"/>
<dbReference type="EMBL" id="CP000703">
    <property type="protein sequence ID" value="ABQ49972.1"/>
    <property type="molecule type" value="Genomic_DNA"/>
</dbReference>
<dbReference type="RefSeq" id="WP_000648723.1">
    <property type="nucleotide sequence ID" value="NC_009487.1"/>
</dbReference>
<dbReference type="SMR" id="A5IUU9"/>
<dbReference type="KEGG" id="saj:SaurJH9_2191"/>
<dbReference type="HOGENOM" id="CLU_036089_2_0_9"/>
<dbReference type="GO" id="GO:0005829">
    <property type="term" value="C:cytosol"/>
    <property type="evidence" value="ECO:0007669"/>
    <property type="project" value="TreeGrafter"/>
</dbReference>
<dbReference type="GO" id="GO:0008926">
    <property type="term" value="F:mannitol-1-phosphate 5-dehydrogenase activity"/>
    <property type="evidence" value="ECO:0007669"/>
    <property type="project" value="UniProtKB-UniRule"/>
</dbReference>
<dbReference type="GO" id="GO:0019592">
    <property type="term" value="P:mannitol catabolic process"/>
    <property type="evidence" value="ECO:0007669"/>
    <property type="project" value="TreeGrafter"/>
</dbReference>
<dbReference type="FunFam" id="3.40.50.720:FF:000316">
    <property type="entry name" value="Mannitol-1-phosphate 5-dehydrogenase"/>
    <property type="match status" value="1"/>
</dbReference>
<dbReference type="Gene3D" id="1.10.1040.10">
    <property type="entry name" value="N-(1-d-carboxylethyl)-l-norvaline Dehydrogenase, domain 2"/>
    <property type="match status" value="1"/>
</dbReference>
<dbReference type="Gene3D" id="3.40.50.720">
    <property type="entry name" value="NAD(P)-binding Rossmann-like Domain"/>
    <property type="match status" value="1"/>
</dbReference>
<dbReference type="HAMAP" id="MF_00196">
    <property type="entry name" value="Mannitol_dehydrog"/>
    <property type="match status" value="1"/>
</dbReference>
<dbReference type="InterPro" id="IPR008927">
    <property type="entry name" value="6-PGluconate_DH-like_C_sf"/>
</dbReference>
<dbReference type="InterPro" id="IPR013328">
    <property type="entry name" value="6PGD_dom2"/>
</dbReference>
<dbReference type="InterPro" id="IPR023028">
    <property type="entry name" value="Mannitol_1_phos_5_DH"/>
</dbReference>
<dbReference type="InterPro" id="IPR000669">
    <property type="entry name" value="Mannitol_DH"/>
</dbReference>
<dbReference type="InterPro" id="IPR013118">
    <property type="entry name" value="Mannitol_DH_C"/>
</dbReference>
<dbReference type="InterPro" id="IPR023027">
    <property type="entry name" value="Mannitol_DH_CS"/>
</dbReference>
<dbReference type="InterPro" id="IPR013131">
    <property type="entry name" value="Mannitol_DH_N"/>
</dbReference>
<dbReference type="InterPro" id="IPR036291">
    <property type="entry name" value="NAD(P)-bd_dom_sf"/>
</dbReference>
<dbReference type="NCBIfam" id="NF002645">
    <property type="entry name" value="PRK02318.1-1"/>
    <property type="match status" value="1"/>
</dbReference>
<dbReference type="NCBIfam" id="NF002652">
    <property type="entry name" value="PRK02318.2-5"/>
    <property type="match status" value="1"/>
</dbReference>
<dbReference type="PANTHER" id="PTHR30524:SF0">
    <property type="entry name" value="ALTRONATE OXIDOREDUCTASE-RELATED"/>
    <property type="match status" value="1"/>
</dbReference>
<dbReference type="PANTHER" id="PTHR30524">
    <property type="entry name" value="MANNITOL-1-PHOSPHATE 5-DEHYDROGENASE"/>
    <property type="match status" value="1"/>
</dbReference>
<dbReference type="Pfam" id="PF01232">
    <property type="entry name" value="Mannitol_dh"/>
    <property type="match status" value="1"/>
</dbReference>
<dbReference type="Pfam" id="PF08125">
    <property type="entry name" value="Mannitol_dh_C"/>
    <property type="match status" value="1"/>
</dbReference>
<dbReference type="PRINTS" id="PR00084">
    <property type="entry name" value="MTLDHDRGNASE"/>
</dbReference>
<dbReference type="SUPFAM" id="SSF48179">
    <property type="entry name" value="6-phosphogluconate dehydrogenase C-terminal domain-like"/>
    <property type="match status" value="1"/>
</dbReference>
<dbReference type="SUPFAM" id="SSF51735">
    <property type="entry name" value="NAD(P)-binding Rossmann-fold domains"/>
    <property type="match status" value="1"/>
</dbReference>
<dbReference type="PROSITE" id="PS00974">
    <property type="entry name" value="MANNITOL_DHGENASE"/>
    <property type="match status" value="1"/>
</dbReference>
<feature type="chain" id="PRO_1000077685" description="Mannitol-1-phosphate 5-dehydrogenase">
    <location>
        <begin position="1"/>
        <end position="368"/>
    </location>
</feature>
<feature type="binding site" evidence="1">
    <location>
        <begin position="3"/>
        <end position="14"/>
    </location>
    <ligand>
        <name>NAD(+)</name>
        <dbReference type="ChEBI" id="CHEBI:57540"/>
    </ligand>
</feature>
<protein>
    <recommendedName>
        <fullName evidence="1">Mannitol-1-phosphate 5-dehydrogenase</fullName>
        <ecNumber evidence="1">1.1.1.17</ecNumber>
    </recommendedName>
</protein>
<keyword id="KW-0520">NAD</keyword>
<keyword id="KW-0560">Oxidoreductase</keyword>
<gene>
    <name evidence="1" type="primary">mtlD</name>
    <name type="ordered locus">SaurJH9_2191</name>
</gene>
<evidence type="ECO:0000255" key="1">
    <source>
        <dbReference type="HAMAP-Rule" id="MF_00196"/>
    </source>
</evidence>